<protein>
    <recommendedName>
        <fullName>Chitin synthase regulatory factor 2</fullName>
    </recommendedName>
    <alternativeName>
        <fullName>Chs four homolog 2</fullName>
    </alternativeName>
</protein>
<proteinExistence type="inferred from homology"/>
<accession>O94486</accession>
<feature type="chain" id="PRO_0000089573" description="Chitin synthase regulatory factor 2">
    <location>
        <begin position="1"/>
        <end position="509"/>
    </location>
</feature>
<feature type="propeptide" id="PRO_0000396745" description="Removed in mature form" evidence="1">
    <location>
        <begin position="510"/>
        <end position="512"/>
    </location>
</feature>
<feature type="repeat" description="Sel1-like 1">
    <location>
        <begin position="224"/>
        <end position="260"/>
    </location>
</feature>
<feature type="repeat" description="Sel1-like 2">
    <location>
        <begin position="261"/>
        <end position="296"/>
    </location>
</feature>
<feature type="repeat" description="Sel1-like 3">
    <location>
        <begin position="297"/>
        <end position="333"/>
    </location>
</feature>
<feature type="repeat" description="Sel1-like 4">
    <location>
        <begin position="337"/>
        <end position="377"/>
    </location>
</feature>
<feature type="repeat" description="Sel1-like 5">
    <location>
        <begin position="378"/>
        <end position="414"/>
    </location>
</feature>
<feature type="repeat" description="Sel1-like 6">
    <location>
        <begin position="415"/>
        <end position="452"/>
    </location>
</feature>
<feature type="modified residue" description="Cysteine methyl ester" evidence="1">
    <location>
        <position position="509"/>
    </location>
</feature>
<feature type="lipid moiety-binding region" description="S-farnesyl cysteine" evidence="1">
    <location>
        <position position="509"/>
    </location>
</feature>
<keyword id="KW-0449">Lipoprotein</keyword>
<keyword id="KW-0472">Membrane</keyword>
<keyword id="KW-0488">Methylation</keyword>
<keyword id="KW-0636">Prenylation</keyword>
<keyword id="KW-1185">Reference proteome</keyword>
<keyword id="KW-0677">Repeat</keyword>
<dbReference type="EMBL" id="CU329672">
    <property type="protein sequence ID" value="CAA22651.1"/>
    <property type="molecule type" value="Genomic_DNA"/>
</dbReference>
<dbReference type="PIR" id="T41340">
    <property type="entry name" value="T41340"/>
</dbReference>
<dbReference type="RefSeq" id="NP_588282.1">
    <property type="nucleotide sequence ID" value="NM_001023272.2"/>
</dbReference>
<dbReference type="SMR" id="O94486"/>
<dbReference type="BioGRID" id="276056">
    <property type="interactions" value="1"/>
</dbReference>
<dbReference type="FunCoup" id="O94486">
    <property type="interactions" value="1"/>
</dbReference>
<dbReference type="IntAct" id="O94486">
    <property type="interactions" value="1"/>
</dbReference>
<dbReference type="STRING" id="284812.O94486"/>
<dbReference type="iPTMnet" id="O94486"/>
<dbReference type="PaxDb" id="4896-SPCC417.05c.1"/>
<dbReference type="EnsemblFungi" id="SPCC417.05c.1">
    <property type="protein sequence ID" value="SPCC417.05c.1:pep"/>
    <property type="gene ID" value="SPCC417.05c"/>
</dbReference>
<dbReference type="GeneID" id="2539493"/>
<dbReference type="KEGG" id="spo:2539493"/>
<dbReference type="PomBase" id="SPCC417.05c"/>
<dbReference type="VEuPathDB" id="FungiDB:SPCC417.05c"/>
<dbReference type="eggNOG" id="KOG1550">
    <property type="taxonomic scope" value="Eukaryota"/>
</dbReference>
<dbReference type="HOGENOM" id="CLU_532270_0_0_1"/>
<dbReference type="InParanoid" id="O94486"/>
<dbReference type="PhylomeDB" id="O94486"/>
<dbReference type="PRO" id="PR:O94486"/>
<dbReference type="Proteomes" id="UP000002485">
    <property type="component" value="Chromosome III"/>
</dbReference>
<dbReference type="GO" id="GO:0032153">
    <property type="term" value="C:cell division site"/>
    <property type="evidence" value="ECO:0007005"/>
    <property type="project" value="PomBase"/>
</dbReference>
<dbReference type="GO" id="GO:0005829">
    <property type="term" value="C:cytosol"/>
    <property type="evidence" value="ECO:0007005"/>
    <property type="project" value="PomBase"/>
</dbReference>
<dbReference type="GO" id="GO:0016020">
    <property type="term" value="C:membrane"/>
    <property type="evidence" value="ECO:0007669"/>
    <property type="project" value="UniProtKB-SubCell"/>
</dbReference>
<dbReference type="GO" id="GO:0005634">
    <property type="term" value="C:nucleus"/>
    <property type="evidence" value="ECO:0007005"/>
    <property type="project" value="PomBase"/>
</dbReference>
<dbReference type="FunFam" id="1.25.40.10:FF:002788">
    <property type="entry name" value="Chitin synthase regulatory factor 2"/>
    <property type="match status" value="1"/>
</dbReference>
<dbReference type="Gene3D" id="1.25.40.10">
    <property type="entry name" value="Tetratricopeptide repeat domain"/>
    <property type="match status" value="2"/>
</dbReference>
<dbReference type="InterPro" id="IPR051726">
    <property type="entry name" value="Chitin_Synth_Reg"/>
</dbReference>
<dbReference type="InterPro" id="IPR006597">
    <property type="entry name" value="Sel1-like"/>
</dbReference>
<dbReference type="InterPro" id="IPR011990">
    <property type="entry name" value="TPR-like_helical_dom_sf"/>
</dbReference>
<dbReference type="PANTHER" id="PTHR46430:SF3">
    <property type="entry name" value="ACTIVATOR OF C KINASE PROTEIN 1"/>
    <property type="match status" value="1"/>
</dbReference>
<dbReference type="PANTHER" id="PTHR46430">
    <property type="entry name" value="PROTEIN SKT5-RELATED"/>
    <property type="match status" value="1"/>
</dbReference>
<dbReference type="Pfam" id="PF08238">
    <property type="entry name" value="Sel1"/>
    <property type="match status" value="6"/>
</dbReference>
<dbReference type="SMART" id="SM00671">
    <property type="entry name" value="SEL1"/>
    <property type="match status" value="6"/>
</dbReference>
<dbReference type="SUPFAM" id="SSF81901">
    <property type="entry name" value="HCP-like"/>
    <property type="match status" value="1"/>
</dbReference>
<sequence>MLVSNGGTGSAHEWDRTTIDYDIEPSSDTHAIEISSNDDYLHPLAQFKKSEEFDEVPTNTLIHEVPSFSDSASNIQSQRNLSPFKELEIVSKKKSEQTFSSAVDFSAINVKNLNLKSGLFDPEPPSYDPDYAFNQRSLQSDPGSDEMFRNFKKSISLEELKSSYKLASAEMCEPETRLSFLQLALQAEKSSSRRNREYVARKKEEAFDYLTSFVSQGNSFFGYSEALYLLAVCYGTGALRTEINEKEAYRLYKMAADLNHVQAAYRVAICLQMGFGVTQNTEEAIHYFFRAASGQHVGAMHRMALIYFRGLMSVKRDPVKAMYYLNLGALEADHEFPQALYDLAELYEHGSSYLDGLLELSPRKAFVLYHIAAKYGLKDAQLRVARCFELGQLECDINLVRSFVWYRRLARKRNPEAMWKLSQFYLNGVDDVIYPNPELANEWAKAAAYKNHHLASTFVQDVGKEDVFEKTSITISNEERKSRNSESLPKKKKRLSMLSFKRSKNRESCIIS</sequence>
<evidence type="ECO:0000250" key="1"/>
<evidence type="ECO:0000269" key="2">
    <source>
    </source>
</evidence>
<evidence type="ECO:0000305" key="3"/>
<gene>
    <name type="primary">chr2</name>
    <name type="synonym">cfh2</name>
    <name type="ORF">SPCC417.05c</name>
</gene>
<comment type="function">
    <text evidence="3">Involved in chitin biosynthesis.</text>
</comment>
<comment type="subcellular location">
    <subcellularLocation>
        <location evidence="2">Membrane</location>
        <topology evidence="2">Lipid-anchor</topology>
    </subcellularLocation>
</comment>
<reference key="1">
    <citation type="journal article" date="2002" name="Nature">
        <title>The genome sequence of Schizosaccharomyces pombe.</title>
        <authorList>
            <person name="Wood V."/>
            <person name="Gwilliam R."/>
            <person name="Rajandream M.A."/>
            <person name="Lyne M.H."/>
            <person name="Lyne R."/>
            <person name="Stewart A."/>
            <person name="Sgouros J.G."/>
            <person name="Peat N."/>
            <person name="Hayles J."/>
            <person name="Baker S.G."/>
            <person name="Basham D."/>
            <person name="Bowman S."/>
            <person name="Brooks K."/>
            <person name="Brown D."/>
            <person name="Brown S."/>
            <person name="Chillingworth T."/>
            <person name="Churcher C.M."/>
            <person name="Collins M."/>
            <person name="Connor R."/>
            <person name="Cronin A."/>
            <person name="Davis P."/>
            <person name="Feltwell T."/>
            <person name="Fraser A."/>
            <person name="Gentles S."/>
            <person name="Goble A."/>
            <person name="Hamlin N."/>
            <person name="Harris D.E."/>
            <person name="Hidalgo J."/>
            <person name="Hodgson G."/>
            <person name="Holroyd S."/>
            <person name="Hornsby T."/>
            <person name="Howarth S."/>
            <person name="Huckle E.J."/>
            <person name="Hunt S."/>
            <person name="Jagels K."/>
            <person name="James K.D."/>
            <person name="Jones L."/>
            <person name="Jones M."/>
            <person name="Leather S."/>
            <person name="McDonald S."/>
            <person name="McLean J."/>
            <person name="Mooney P."/>
            <person name="Moule S."/>
            <person name="Mungall K.L."/>
            <person name="Murphy L.D."/>
            <person name="Niblett D."/>
            <person name="Odell C."/>
            <person name="Oliver K."/>
            <person name="O'Neil S."/>
            <person name="Pearson D."/>
            <person name="Quail M.A."/>
            <person name="Rabbinowitsch E."/>
            <person name="Rutherford K.M."/>
            <person name="Rutter S."/>
            <person name="Saunders D."/>
            <person name="Seeger K."/>
            <person name="Sharp S."/>
            <person name="Skelton J."/>
            <person name="Simmonds M.N."/>
            <person name="Squares R."/>
            <person name="Squares S."/>
            <person name="Stevens K."/>
            <person name="Taylor K."/>
            <person name="Taylor R.G."/>
            <person name="Tivey A."/>
            <person name="Walsh S.V."/>
            <person name="Warren T."/>
            <person name="Whitehead S."/>
            <person name="Woodward J.R."/>
            <person name="Volckaert G."/>
            <person name="Aert R."/>
            <person name="Robben J."/>
            <person name="Grymonprez B."/>
            <person name="Weltjens I."/>
            <person name="Vanstreels E."/>
            <person name="Rieger M."/>
            <person name="Schaefer M."/>
            <person name="Mueller-Auer S."/>
            <person name="Gabel C."/>
            <person name="Fuchs M."/>
            <person name="Duesterhoeft A."/>
            <person name="Fritzc C."/>
            <person name="Holzer E."/>
            <person name="Moestl D."/>
            <person name="Hilbert H."/>
            <person name="Borzym K."/>
            <person name="Langer I."/>
            <person name="Beck A."/>
            <person name="Lehrach H."/>
            <person name="Reinhardt R."/>
            <person name="Pohl T.M."/>
            <person name="Eger P."/>
            <person name="Zimmermann W."/>
            <person name="Wedler H."/>
            <person name="Wambutt R."/>
            <person name="Purnelle B."/>
            <person name="Goffeau A."/>
            <person name="Cadieu E."/>
            <person name="Dreano S."/>
            <person name="Gloux S."/>
            <person name="Lelaure V."/>
            <person name="Mottier S."/>
            <person name="Galibert F."/>
            <person name="Aves S.J."/>
            <person name="Xiang Z."/>
            <person name="Hunt C."/>
            <person name="Moore K."/>
            <person name="Hurst S.M."/>
            <person name="Lucas M."/>
            <person name="Rochet M."/>
            <person name="Gaillardin C."/>
            <person name="Tallada V.A."/>
            <person name="Garzon A."/>
            <person name="Thode G."/>
            <person name="Daga R.R."/>
            <person name="Cruzado L."/>
            <person name="Jimenez J."/>
            <person name="Sanchez M."/>
            <person name="del Rey F."/>
            <person name="Benito J."/>
            <person name="Dominguez A."/>
            <person name="Revuelta J.L."/>
            <person name="Moreno S."/>
            <person name="Armstrong J."/>
            <person name="Forsburg S.L."/>
            <person name="Cerutti L."/>
            <person name="Lowe T."/>
            <person name="McCombie W.R."/>
            <person name="Paulsen I."/>
            <person name="Potashkin J."/>
            <person name="Shpakovski G.V."/>
            <person name="Ussery D."/>
            <person name="Barrell B.G."/>
            <person name="Nurse P."/>
        </authorList>
    </citation>
    <scope>NUCLEOTIDE SEQUENCE [LARGE SCALE GENOMIC DNA]</scope>
    <source>
        <strain>972 / ATCC 24843</strain>
    </source>
</reference>
<reference key="2">
    <citation type="journal article" date="2004" name="Mol. Genet. Genomics">
        <title>Two-hybrid search for proteins that interact with Sad1 and Kms1, two membrane-bound components of the spindle pole body in fission yeast.</title>
        <authorList>
            <person name="Miki F."/>
            <person name="Kurabayashi A."/>
            <person name="Tange Y."/>
            <person name="Okazaki K."/>
            <person name="Shimanuki M."/>
            <person name="Niwa O."/>
        </authorList>
    </citation>
    <scope>SUBCELLULAR LOCATION</scope>
</reference>
<reference key="3">
    <citation type="journal article" date="2004" name="Yeast">
        <title>Chr4, a Schizosaccharomyces pombe homologue of the Saccharomyces cerevisiae Chs4p/Skt5p protein, is related to septum formation and is required for the proper localization of Chs2.</title>
        <authorList>
            <person name="Matsuo Y."/>
            <person name="Matsuura Y."/>
            <person name="Tanaka K."/>
            <person name="Matsuda H."/>
            <person name="Kawamukai M."/>
        </authorList>
    </citation>
    <scope>IDENTIFICATION</scope>
    <scope>POSSIBLE FUNCTION</scope>
</reference>
<name>CHR2_SCHPO</name>
<organism>
    <name type="scientific">Schizosaccharomyces pombe (strain 972 / ATCC 24843)</name>
    <name type="common">Fission yeast</name>
    <dbReference type="NCBI Taxonomy" id="284812"/>
    <lineage>
        <taxon>Eukaryota</taxon>
        <taxon>Fungi</taxon>
        <taxon>Dikarya</taxon>
        <taxon>Ascomycota</taxon>
        <taxon>Taphrinomycotina</taxon>
        <taxon>Schizosaccharomycetes</taxon>
        <taxon>Schizosaccharomycetales</taxon>
        <taxon>Schizosaccharomycetaceae</taxon>
        <taxon>Schizosaccharomyces</taxon>
    </lineage>
</organism>